<sequence>MCPEQPHDTRAERDEMSEQTQQAAQPAETAAYDVRAIQDKWLPVWERLDPFRADDSSPREKKYALTMFPYPSGDLHMGHAEVTALHDVVARYWWQRGYEVLNPMGWDSFGLPAENAAIRNDEHPATYTYANIETQYESFKRYAVSFDWSRRLHTSDPEYYRWTQWLFLKFRERGLAYRKSSPVNWCPNDQTVLANEQVVDGRCERCGAEVTKRELTQWYFKITDYAQELLDRLDDLEPTWPARVVTAQRNWIGRSEGAHVDFVVDGRDEPITVYTTRPDTIFGTTFMVVAVDSPLAAELVTDAQRPAFEAYREEIRKETEIERLSTDRPKTGVDLGVTATNPVTGTQIPVWATDYVLADYGTGAVMGVPGGDQRDWEFATEMGLDIVRTTQTPEGFDGEAYHGEGPAINSPAPGADAPLDINGLPVDEAKRATIEFLEQQGTGAGAVNFRLRDWLLSRQRYWGVPIPIIHCDACGEVAVPYDQLPLELPELRGADLKPKGVSPLAAAEEWVNVACPECGGAATRDSDTMDTFVDSSWYFLRYCSPDYTEGPFDVEKAKAWMPADIYVGGVEHAVLHLLYARFFTKVLRDMGMLEVDEPFAAQLNQGIVINQGKKMSKSLGNGVSLGDQLAEFGVDAVRVTLVFAGPPEDDIDWADVSPAGALRFLQRAWRLSGDVTSEAGTPAAGGDVALRRVTARTVHDAAELIESYRFNVMVARVMELVNATRKAIDGAPGPADPAVREATETVAILLSLVAPYVAEEMWERLGHEPTVARVGWPEVDPALLVEEQVTAVVQIQGKVRARLEVAPDISEADLEQLAMADPAVVRAIDGRPVRKVIVRAPKLVNVVV</sequence>
<accession>A1SHV9</accession>
<reference key="1">
    <citation type="submission" date="2006-12" db="EMBL/GenBank/DDBJ databases">
        <title>Complete sequence of chromosome 1 of Nocardioides sp. JS614.</title>
        <authorList>
            <person name="Copeland A."/>
            <person name="Lucas S."/>
            <person name="Lapidus A."/>
            <person name="Barry K."/>
            <person name="Detter J.C."/>
            <person name="Glavina del Rio T."/>
            <person name="Hammon N."/>
            <person name="Israni S."/>
            <person name="Dalin E."/>
            <person name="Tice H."/>
            <person name="Pitluck S."/>
            <person name="Thompson L.S."/>
            <person name="Brettin T."/>
            <person name="Bruce D."/>
            <person name="Han C."/>
            <person name="Tapia R."/>
            <person name="Schmutz J."/>
            <person name="Larimer F."/>
            <person name="Land M."/>
            <person name="Hauser L."/>
            <person name="Kyrpides N."/>
            <person name="Kim E."/>
            <person name="Mattes T."/>
            <person name="Gossett J."/>
            <person name="Richardson P."/>
        </authorList>
    </citation>
    <scope>NUCLEOTIDE SEQUENCE [LARGE SCALE GENOMIC DNA]</scope>
    <source>
        <strain>ATCC BAA-499 / JS614</strain>
    </source>
</reference>
<feature type="chain" id="PRO_0000334783" description="Leucine--tRNA ligase">
    <location>
        <begin position="1"/>
        <end position="848"/>
    </location>
</feature>
<feature type="region of interest" description="Disordered" evidence="2">
    <location>
        <begin position="1"/>
        <end position="30"/>
    </location>
</feature>
<feature type="short sequence motif" description="'HIGH' region">
    <location>
        <begin position="69"/>
        <end position="79"/>
    </location>
</feature>
<feature type="short sequence motif" description="'KMSKS' region">
    <location>
        <begin position="614"/>
        <end position="618"/>
    </location>
</feature>
<feature type="compositionally biased region" description="Basic and acidic residues" evidence="2">
    <location>
        <begin position="1"/>
        <end position="16"/>
    </location>
</feature>
<feature type="compositionally biased region" description="Low complexity" evidence="2">
    <location>
        <begin position="18"/>
        <end position="30"/>
    </location>
</feature>
<feature type="binding site" evidence="1">
    <location>
        <position position="617"/>
    </location>
    <ligand>
        <name>ATP</name>
        <dbReference type="ChEBI" id="CHEBI:30616"/>
    </ligand>
</feature>
<organism>
    <name type="scientific">Nocardioides sp. (strain ATCC BAA-499 / JS614)</name>
    <dbReference type="NCBI Taxonomy" id="196162"/>
    <lineage>
        <taxon>Bacteria</taxon>
        <taxon>Bacillati</taxon>
        <taxon>Actinomycetota</taxon>
        <taxon>Actinomycetes</taxon>
        <taxon>Propionibacteriales</taxon>
        <taxon>Nocardioidaceae</taxon>
        <taxon>Nocardioides</taxon>
    </lineage>
</organism>
<protein>
    <recommendedName>
        <fullName evidence="1">Leucine--tRNA ligase</fullName>
        <ecNumber evidence="1">6.1.1.4</ecNumber>
    </recommendedName>
    <alternativeName>
        <fullName evidence="1">Leucyl-tRNA synthetase</fullName>
        <shortName evidence="1">LeuRS</shortName>
    </alternativeName>
</protein>
<name>SYL_NOCSJ</name>
<proteinExistence type="inferred from homology"/>
<gene>
    <name evidence="1" type="primary">leuS</name>
    <name type="ordered locus">Noca_1884</name>
</gene>
<comment type="catalytic activity">
    <reaction evidence="1">
        <text>tRNA(Leu) + L-leucine + ATP = L-leucyl-tRNA(Leu) + AMP + diphosphate</text>
        <dbReference type="Rhea" id="RHEA:11688"/>
        <dbReference type="Rhea" id="RHEA-COMP:9613"/>
        <dbReference type="Rhea" id="RHEA-COMP:9622"/>
        <dbReference type="ChEBI" id="CHEBI:30616"/>
        <dbReference type="ChEBI" id="CHEBI:33019"/>
        <dbReference type="ChEBI" id="CHEBI:57427"/>
        <dbReference type="ChEBI" id="CHEBI:78442"/>
        <dbReference type="ChEBI" id="CHEBI:78494"/>
        <dbReference type="ChEBI" id="CHEBI:456215"/>
        <dbReference type="EC" id="6.1.1.4"/>
    </reaction>
</comment>
<comment type="subcellular location">
    <subcellularLocation>
        <location evidence="1">Cytoplasm</location>
    </subcellularLocation>
</comment>
<comment type="similarity">
    <text evidence="1">Belongs to the class-I aminoacyl-tRNA synthetase family.</text>
</comment>
<keyword id="KW-0030">Aminoacyl-tRNA synthetase</keyword>
<keyword id="KW-0067">ATP-binding</keyword>
<keyword id="KW-0963">Cytoplasm</keyword>
<keyword id="KW-0436">Ligase</keyword>
<keyword id="KW-0547">Nucleotide-binding</keyword>
<keyword id="KW-0648">Protein biosynthesis</keyword>
<keyword id="KW-1185">Reference proteome</keyword>
<evidence type="ECO:0000255" key="1">
    <source>
        <dbReference type="HAMAP-Rule" id="MF_00049"/>
    </source>
</evidence>
<evidence type="ECO:0000256" key="2">
    <source>
        <dbReference type="SAM" id="MobiDB-lite"/>
    </source>
</evidence>
<dbReference type="EC" id="6.1.1.4" evidence="1"/>
<dbReference type="EMBL" id="CP000509">
    <property type="protein sequence ID" value="ABL81394.1"/>
    <property type="molecule type" value="Genomic_DNA"/>
</dbReference>
<dbReference type="SMR" id="A1SHV9"/>
<dbReference type="STRING" id="196162.Noca_1884"/>
<dbReference type="KEGG" id="nca:Noca_1884"/>
<dbReference type="eggNOG" id="COG0495">
    <property type="taxonomic scope" value="Bacteria"/>
</dbReference>
<dbReference type="HOGENOM" id="CLU_004427_0_0_11"/>
<dbReference type="OrthoDB" id="9810365at2"/>
<dbReference type="Proteomes" id="UP000000640">
    <property type="component" value="Chromosome"/>
</dbReference>
<dbReference type="GO" id="GO:0005829">
    <property type="term" value="C:cytosol"/>
    <property type="evidence" value="ECO:0007669"/>
    <property type="project" value="TreeGrafter"/>
</dbReference>
<dbReference type="GO" id="GO:0002161">
    <property type="term" value="F:aminoacyl-tRNA deacylase activity"/>
    <property type="evidence" value="ECO:0007669"/>
    <property type="project" value="InterPro"/>
</dbReference>
<dbReference type="GO" id="GO:0005524">
    <property type="term" value="F:ATP binding"/>
    <property type="evidence" value="ECO:0007669"/>
    <property type="project" value="UniProtKB-UniRule"/>
</dbReference>
<dbReference type="GO" id="GO:0004823">
    <property type="term" value="F:leucine-tRNA ligase activity"/>
    <property type="evidence" value="ECO:0007669"/>
    <property type="project" value="UniProtKB-UniRule"/>
</dbReference>
<dbReference type="GO" id="GO:0006429">
    <property type="term" value="P:leucyl-tRNA aminoacylation"/>
    <property type="evidence" value="ECO:0007669"/>
    <property type="project" value="UniProtKB-UniRule"/>
</dbReference>
<dbReference type="CDD" id="cd07958">
    <property type="entry name" value="Anticodon_Ia_Leu_BEm"/>
    <property type="match status" value="1"/>
</dbReference>
<dbReference type="CDD" id="cd00812">
    <property type="entry name" value="LeuRS_core"/>
    <property type="match status" value="1"/>
</dbReference>
<dbReference type="FunFam" id="1.10.730.10:FF:000002">
    <property type="entry name" value="Leucine--tRNA ligase"/>
    <property type="match status" value="1"/>
</dbReference>
<dbReference type="FunFam" id="3.40.50.620:FF:000003">
    <property type="entry name" value="Leucine--tRNA ligase"/>
    <property type="match status" value="1"/>
</dbReference>
<dbReference type="FunFam" id="3.40.50.620:FF:000056">
    <property type="entry name" value="Leucine--tRNA ligase"/>
    <property type="match status" value="1"/>
</dbReference>
<dbReference type="Gene3D" id="3.10.20.590">
    <property type="match status" value="1"/>
</dbReference>
<dbReference type="Gene3D" id="3.40.50.620">
    <property type="entry name" value="HUPs"/>
    <property type="match status" value="2"/>
</dbReference>
<dbReference type="Gene3D" id="1.10.730.10">
    <property type="entry name" value="Isoleucyl-tRNA Synthetase, Domain 1"/>
    <property type="match status" value="1"/>
</dbReference>
<dbReference type="Gene3D" id="3.90.740.10">
    <property type="entry name" value="Valyl/Leucyl/Isoleucyl-tRNA synthetase, editing domain"/>
    <property type="match status" value="1"/>
</dbReference>
<dbReference type="HAMAP" id="MF_00049_B">
    <property type="entry name" value="Leu_tRNA_synth_B"/>
    <property type="match status" value="1"/>
</dbReference>
<dbReference type="InterPro" id="IPR001412">
    <property type="entry name" value="aa-tRNA-synth_I_CS"/>
</dbReference>
<dbReference type="InterPro" id="IPR002300">
    <property type="entry name" value="aa-tRNA-synth_Ia"/>
</dbReference>
<dbReference type="InterPro" id="IPR002302">
    <property type="entry name" value="Leu-tRNA-ligase"/>
</dbReference>
<dbReference type="InterPro" id="IPR025709">
    <property type="entry name" value="Leu_tRNA-synth_edit"/>
</dbReference>
<dbReference type="InterPro" id="IPR013155">
    <property type="entry name" value="M/V/L/I-tRNA-synth_anticd-bd"/>
</dbReference>
<dbReference type="InterPro" id="IPR014729">
    <property type="entry name" value="Rossmann-like_a/b/a_fold"/>
</dbReference>
<dbReference type="InterPro" id="IPR009080">
    <property type="entry name" value="tRNAsynth_Ia_anticodon-bd"/>
</dbReference>
<dbReference type="InterPro" id="IPR009008">
    <property type="entry name" value="Val/Leu/Ile-tRNA-synth_edit"/>
</dbReference>
<dbReference type="NCBIfam" id="TIGR00396">
    <property type="entry name" value="leuS_bact"/>
    <property type="match status" value="1"/>
</dbReference>
<dbReference type="PANTHER" id="PTHR43740:SF2">
    <property type="entry name" value="LEUCINE--TRNA LIGASE, MITOCHONDRIAL"/>
    <property type="match status" value="1"/>
</dbReference>
<dbReference type="PANTHER" id="PTHR43740">
    <property type="entry name" value="LEUCYL-TRNA SYNTHETASE"/>
    <property type="match status" value="1"/>
</dbReference>
<dbReference type="Pfam" id="PF08264">
    <property type="entry name" value="Anticodon_1"/>
    <property type="match status" value="1"/>
</dbReference>
<dbReference type="Pfam" id="PF00133">
    <property type="entry name" value="tRNA-synt_1"/>
    <property type="match status" value="2"/>
</dbReference>
<dbReference type="Pfam" id="PF13603">
    <property type="entry name" value="tRNA-synt_1_2"/>
    <property type="match status" value="1"/>
</dbReference>
<dbReference type="PRINTS" id="PR00985">
    <property type="entry name" value="TRNASYNTHLEU"/>
</dbReference>
<dbReference type="SUPFAM" id="SSF47323">
    <property type="entry name" value="Anticodon-binding domain of a subclass of class I aminoacyl-tRNA synthetases"/>
    <property type="match status" value="1"/>
</dbReference>
<dbReference type="SUPFAM" id="SSF52374">
    <property type="entry name" value="Nucleotidylyl transferase"/>
    <property type="match status" value="1"/>
</dbReference>
<dbReference type="SUPFAM" id="SSF50677">
    <property type="entry name" value="ValRS/IleRS/LeuRS editing domain"/>
    <property type="match status" value="1"/>
</dbReference>
<dbReference type="PROSITE" id="PS00178">
    <property type="entry name" value="AA_TRNA_LIGASE_I"/>
    <property type="match status" value="1"/>
</dbReference>